<keyword id="KW-1003">Cell membrane</keyword>
<keyword id="KW-0472">Membrane</keyword>
<keyword id="KW-1185">Reference proteome</keyword>
<keyword id="KW-0812">Transmembrane</keyword>
<keyword id="KW-1133">Transmembrane helix</keyword>
<name>Y976_TREPA</name>
<comment type="subcellular location">
    <subcellularLocation>
        <location evidence="3">Cell membrane</location>
        <topology evidence="3">Multi-pass membrane protein</topology>
    </subcellularLocation>
</comment>
<accession>O83941</accession>
<feature type="chain" id="PRO_0000202368" description="Uncharacterized protein TP_0976">
    <location>
        <begin position="1"/>
        <end position="459"/>
    </location>
</feature>
<feature type="transmembrane region" description="Helical" evidence="1">
    <location>
        <begin position="53"/>
        <end position="75"/>
    </location>
</feature>
<feature type="transmembrane region" description="Helical" evidence="1">
    <location>
        <begin position="111"/>
        <end position="133"/>
    </location>
</feature>
<feature type="region of interest" description="Disordered" evidence="2">
    <location>
        <begin position="174"/>
        <end position="196"/>
    </location>
</feature>
<reference key="1">
    <citation type="journal article" date="1998" name="Science">
        <title>Complete genome sequence of Treponema pallidum, the syphilis spirochete.</title>
        <authorList>
            <person name="Fraser C.M."/>
            <person name="Norris S.J."/>
            <person name="Weinstock G.M."/>
            <person name="White O."/>
            <person name="Sutton G.G."/>
            <person name="Dodson R.J."/>
            <person name="Gwinn M.L."/>
            <person name="Hickey E.K."/>
            <person name="Clayton R.A."/>
            <person name="Ketchum K.A."/>
            <person name="Sodergren E."/>
            <person name="Hardham J.M."/>
            <person name="McLeod M.P."/>
            <person name="Salzberg S.L."/>
            <person name="Peterson J.D."/>
            <person name="Khalak H.G."/>
            <person name="Richardson D.L."/>
            <person name="Howell J.K."/>
            <person name="Chidambaram M."/>
            <person name="Utterback T.R."/>
            <person name="McDonald L.A."/>
            <person name="Artiach P."/>
            <person name="Bowman C."/>
            <person name="Cotton M.D."/>
            <person name="Fujii C."/>
            <person name="Garland S.A."/>
            <person name="Hatch B."/>
            <person name="Horst K."/>
            <person name="Roberts K.M."/>
            <person name="Sandusky M."/>
            <person name="Weidman J.F."/>
            <person name="Smith H.O."/>
            <person name="Venter J.C."/>
        </authorList>
    </citation>
    <scope>NUCLEOTIDE SEQUENCE [LARGE SCALE GENOMIC DNA]</scope>
    <source>
        <strain>Nichols</strain>
    </source>
</reference>
<sequence>MVLTQKNLVKRTTESTETEAVSDLLVSELLILGLSLPALLRPFSRQSRKISAIPLLPVLALSVGALTVLGQGLTLDLTLSLVSSSVVCLTELPRLVAFSQGIPNDLYSAGARIARVLLLVAGVFTLVIVCLCAPEPGYRPSRSVVRSSFSLRLGNTKVNAGLLLSLANPYETSHLDNPSAPHPSENPQSRAHPKQNPVGVNVVVLKNTPQSAHRAHPETLELMLAERGYTVFVPYQDAYSPSYSAASLAAPMRTSPGVVLLSSALRGVPFDVPTPYVSRRANTIDAATFEDAHVPALFPALFALCRHAPTFVYAESAHEVMLSRFLQQQPHACAGVFFVLPDSAARGPHHAPAVQGAPPPVDTAGVASAVRGASRTLPAVYRQYVHAAEAAWAELASTDILAAYLAGLPRDRHRTRLQARATQVDQWIRAQLHLSEPVLPHAQALSHHTVHAGGTYDRT</sequence>
<dbReference type="EMBL" id="AE000520">
    <property type="protein sequence ID" value="AAC65940.1"/>
    <property type="molecule type" value="Genomic_DNA"/>
</dbReference>
<dbReference type="PIR" id="F71257">
    <property type="entry name" value="F71257"/>
</dbReference>
<dbReference type="RefSeq" id="WP_010882420.1">
    <property type="nucleotide sequence ID" value="NC_021490.2"/>
</dbReference>
<dbReference type="IntAct" id="O83941">
    <property type="interactions" value="6"/>
</dbReference>
<dbReference type="STRING" id="243276.TP_0976"/>
<dbReference type="EnsemblBacteria" id="AAC65940">
    <property type="protein sequence ID" value="AAC65940"/>
    <property type="gene ID" value="TP_0976"/>
</dbReference>
<dbReference type="KEGG" id="tpa:TP_0976"/>
<dbReference type="KEGG" id="tpw:TPANIC_0976"/>
<dbReference type="eggNOG" id="ENOG5030273">
    <property type="taxonomic scope" value="Bacteria"/>
</dbReference>
<dbReference type="HOGENOM" id="CLU_555407_0_0_12"/>
<dbReference type="Proteomes" id="UP000000811">
    <property type="component" value="Chromosome"/>
</dbReference>
<dbReference type="GO" id="GO:0005886">
    <property type="term" value="C:plasma membrane"/>
    <property type="evidence" value="ECO:0007669"/>
    <property type="project" value="UniProtKB-SubCell"/>
</dbReference>
<organism>
    <name type="scientific">Treponema pallidum (strain Nichols)</name>
    <dbReference type="NCBI Taxonomy" id="243276"/>
    <lineage>
        <taxon>Bacteria</taxon>
        <taxon>Pseudomonadati</taxon>
        <taxon>Spirochaetota</taxon>
        <taxon>Spirochaetia</taxon>
        <taxon>Spirochaetales</taxon>
        <taxon>Treponemataceae</taxon>
        <taxon>Treponema</taxon>
    </lineage>
</organism>
<protein>
    <recommendedName>
        <fullName>Uncharacterized protein TP_0976</fullName>
    </recommendedName>
</protein>
<proteinExistence type="predicted"/>
<evidence type="ECO:0000255" key="1"/>
<evidence type="ECO:0000256" key="2">
    <source>
        <dbReference type="SAM" id="MobiDB-lite"/>
    </source>
</evidence>
<evidence type="ECO:0000305" key="3"/>
<gene>
    <name type="ordered locus">TP_0976</name>
</gene>